<reference key="1">
    <citation type="journal article" date="2009" name="J. Bacteriol.">
        <title>Genomic sequencing reveals regulatory mutations and recombinational events in the widely used MC4100 lineage of Escherichia coli K-12.</title>
        <authorList>
            <person name="Ferenci T."/>
            <person name="Zhou Z."/>
            <person name="Betteridge T."/>
            <person name="Ren Y."/>
            <person name="Liu Y."/>
            <person name="Feng L."/>
            <person name="Reeves P.R."/>
            <person name="Wang L."/>
        </authorList>
    </citation>
    <scope>NUCLEOTIDE SEQUENCE [LARGE SCALE GENOMIC DNA]</scope>
    <source>
        <strain>K12 / MC4100 / BW2952</strain>
    </source>
</reference>
<keyword id="KW-0560">Oxidoreductase</keyword>
<organism>
    <name type="scientific">Escherichia coli (strain K12 / MC4100 / BW2952)</name>
    <dbReference type="NCBI Taxonomy" id="595496"/>
    <lineage>
        <taxon>Bacteria</taxon>
        <taxon>Pseudomonadati</taxon>
        <taxon>Pseudomonadota</taxon>
        <taxon>Gammaproteobacteria</taxon>
        <taxon>Enterobacterales</taxon>
        <taxon>Enterobacteriaceae</taxon>
        <taxon>Escherichia</taxon>
    </lineage>
</organism>
<name>MSRA_ECOBW</name>
<accession>C4ZR95</accession>
<sequence>MSLFDKKHLVSPADALPGRNTPMPVATLHAVNGHSMTNVPDGMEIAIFAMGCFWGVERLFWQLPGVYSTAAGYTGGYTPNPTYREVCSGDTGHAEAVRIVYDPSVISYEQLLQVFWENHDPAQGMRQGNDHGTQYRSAIYPLTPEQDAAARASLERFQAAMLAADDDRHITTEIANATPFYYAEDDHQQYLHKNPYGYCGIGGIGVCLPPEA</sequence>
<proteinExistence type="inferred from homology"/>
<dbReference type="EC" id="1.8.4.11" evidence="1"/>
<dbReference type="EMBL" id="CP001396">
    <property type="protein sequence ID" value="ACR63754.1"/>
    <property type="molecule type" value="Genomic_DNA"/>
</dbReference>
<dbReference type="RefSeq" id="WP_001295196.1">
    <property type="nucleotide sequence ID" value="NC_012759.1"/>
</dbReference>
<dbReference type="SMR" id="C4ZR95"/>
<dbReference type="GeneID" id="93777602"/>
<dbReference type="KEGG" id="ebw:BWG_3930"/>
<dbReference type="HOGENOM" id="CLU_031040_10_3_6"/>
<dbReference type="GO" id="GO:0005737">
    <property type="term" value="C:cytoplasm"/>
    <property type="evidence" value="ECO:0007669"/>
    <property type="project" value="TreeGrafter"/>
</dbReference>
<dbReference type="GO" id="GO:0036456">
    <property type="term" value="F:L-methionine-(S)-S-oxide reductase activity"/>
    <property type="evidence" value="ECO:0007669"/>
    <property type="project" value="TreeGrafter"/>
</dbReference>
<dbReference type="GO" id="GO:0008113">
    <property type="term" value="F:peptide-methionine (S)-S-oxide reductase activity"/>
    <property type="evidence" value="ECO:0007669"/>
    <property type="project" value="UniProtKB-UniRule"/>
</dbReference>
<dbReference type="GO" id="GO:0034599">
    <property type="term" value="P:cellular response to oxidative stress"/>
    <property type="evidence" value="ECO:0007669"/>
    <property type="project" value="TreeGrafter"/>
</dbReference>
<dbReference type="GO" id="GO:0036211">
    <property type="term" value="P:protein modification process"/>
    <property type="evidence" value="ECO:0007669"/>
    <property type="project" value="UniProtKB-UniRule"/>
</dbReference>
<dbReference type="FunFam" id="3.30.1060.10:FF:000001">
    <property type="entry name" value="Peptide methionine sulfoxide reductase MsrA"/>
    <property type="match status" value="1"/>
</dbReference>
<dbReference type="Gene3D" id="3.30.1060.10">
    <property type="entry name" value="Peptide methionine sulphoxide reductase MsrA"/>
    <property type="match status" value="1"/>
</dbReference>
<dbReference type="HAMAP" id="MF_01401">
    <property type="entry name" value="MsrA"/>
    <property type="match status" value="1"/>
</dbReference>
<dbReference type="InterPro" id="IPR002569">
    <property type="entry name" value="Met_Sox_Rdtase_MsrA_dom"/>
</dbReference>
<dbReference type="InterPro" id="IPR036509">
    <property type="entry name" value="Met_Sox_Rdtase_MsrA_sf"/>
</dbReference>
<dbReference type="InterPro" id="IPR050162">
    <property type="entry name" value="MsrA_MetSO_reductase"/>
</dbReference>
<dbReference type="NCBIfam" id="TIGR00401">
    <property type="entry name" value="msrA"/>
    <property type="match status" value="1"/>
</dbReference>
<dbReference type="PANTHER" id="PTHR42799">
    <property type="entry name" value="MITOCHONDRIAL PEPTIDE METHIONINE SULFOXIDE REDUCTASE"/>
    <property type="match status" value="1"/>
</dbReference>
<dbReference type="PANTHER" id="PTHR42799:SF2">
    <property type="entry name" value="MITOCHONDRIAL PEPTIDE METHIONINE SULFOXIDE REDUCTASE"/>
    <property type="match status" value="1"/>
</dbReference>
<dbReference type="Pfam" id="PF01625">
    <property type="entry name" value="PMSR"/>
    <property type="match status" value="1"/>
</dbReference>
<dbReference type="SUPFAM" id="SSF55068">
    <property type="entry name" value="Peptide methionine sulfoxide reductase"/>
    <property type="match status" value="1"/>
</dbReference>
<gene>
    <name evidence="1" type="primary">msrA</name>
    <name type="ordered locus">BWG_3930</name>
</gene>
<comment type="function">
    <text evidence="1">Has an important function as a repair enzyme for proteins that have been inactivated by oxidation. Catalyzes the reversible oxidation-reduction of methionine sulfoxide in proteins to methionine.</text>
</comment>
<comment type="catalytic activity">
    <reaction evidence="1">
        <text>L-methionyl-[protein] + [thioredoxin]-disulfide + H2O = L-methionyl-(S)-S-oxide-[protein] + [thioredoxin]-dithiol</text>
        <dbReference type="Rhea" id="RHEA:14217"/>
        <dbReference type="Rhea" id="RHEA-COMP:10698"/>
        <dbReference type="Rhea" id="RHEA-COMP:10700"/>
        <dbReference type="Rhea" id="RHEA-COMP:12313"/>
        <dbReference type="Rhea" id="RHEA-COMP:12315"/>
        <dbReference type="ChEBI" id="CHEBI:15377"/>
        <dbReference type="ChEBI" id="CHEBI:16044"/>
        <dbReference type="ChEBI" id="CHEBI:29950"/>
        <dbReference type="ChEBI" id="CHEBI:44120"/>
        <dbReference type="ChEBI" id="CHEBI:50058"/>
        <dbReference type="EC" id="1.8.4.11"/>
    </reaction>
</comment>
<comment type="catalytic activity">
    <reaction evidence="1">
        <text>[thioredoxin]-disulfide + L-methionine + H2O = L-methionine (S)-S-oxide + [thioredoxin]-dithiol</text>
        <dbReference type="Rhea" id="RHEA:19993"/>
        <dbReference type="Rhea" id="RHEA-COMP:10698"/>
        <dbReference type="Rhea" id="RHEA-COMP:10700"/>
        <dbReference type="ChEBI" id="CHEBI:15377"/>
        <dbReference type="ChEBI" id="CHEBI:29950"/>
        <dbReference type="ChEBI" id="CHEBI:50058"/>
        <dbReference type="ChEBI" id="CHEBI:57844"/>
        <dbReference type="ChEBI" id="CHEBI:58772"/>
        <dbReference type="EC" id="1.8.4.11"/>
    </reaction>
</comment>
<comment type="similarity">
    <text evidence="1">Belongs to the MsrA Met sulfoxide reductase family.</text>
</comment>
<feature type="chain" id="PRO_1000215187" description="Peptide methionine sulfoxide reductase MsrA">
    <location>
        <begin position="1"/>
        <end position="212"/>
    </location>
</feature>
<feature type="active site" evidence="1">
    <location>
        <position position="52"/>
    </location>
</feature>
<evidence type="ECO:0000255" key="1">
    <source>
        <dbReference type="HAMAP-Rule" id="MF_01401"/>
    </source>
</evidence>
<protein>
    <recommendedName>
        <fullName evidence="1">Peptide methionine sulfoxide reductase MsrA</fullName>
        <shortName evidence="1">Protein-methionine-S-oxide reductase</shortName>
        <ecNumber evidence="1">1.8.4.11</ecNumber>
    </recommendedName>
    <alternativeName>
        <fullName evidence="1">Peptide-methionine (S)-S-oxide reductase</fullName>
        <shortName evidence="1">Peptide Met(O) reductase</shortName>
    </alternativeName>
</protein>